<feature type="chain" id="PRO_1000120960" description="Large ribosomal subunit protein uL10">
    <location>
        <begin position="1"/>
        <end position="160"/>
    </location>
</feature>
<name>RL10_EHRCJ</name>
<reference key="1">
    <citation type="journal article" date="2006" name="J. Bacteriol.">
        <title>The genome of the obligately intracellular bacterium Ehrlichia canis reveals themes of complex membrane structure and immune evasion strategies.</title>
        <authorList>
            <person name="Mavromatis K."/>
            <person name="Doyle C.K."/>
            <person name="Lykidis A."/>
            <person name="Ivanova N."/>
            <person name="Francino M.P."/>
            <person name="Chain P."/>
            <person name="Shin M."/>
            <person name="Malfatti S."/>
            <person name="Larimer F."/>
            <person name="Copeland A."/>
            <person name="Detter J.C."/>
            <person name="Land M."/>
            <person name="Richardson P.M."/>
            <person name="Yu X.J."/>
            <person name="Walker D.H."/>
            <person name="McBride J.W."/>
            <person name="Kyrpides N.C."/>
        </authorList>
    </citation>
    <scope>NUCLEOTIDE SEQUENCE [LARGE SCALE GENOMIC DNA]</scope>
    <source>
        <strain>Jake</strain>
    </source>
</reference>
<gene>
    <name evidence="1" type="primary">rplJ</name>
    <name type="ordered locus">Ecaj_0167</name>
</gene>
<evidence type="ECO:0000255" key="1">
    <source>
        <dbReference type="HAMAP-Rule" id="MF_00362"/>
    </source>
</evidence>
<evidence type="ECO:0000305" key="2"/>
<proteinExistence type="inferred from homology"/>
<keyword id="KW-0687">Ribonucleoprotein</keyword>
<keyword id="KW-0689">Ribosomal protein</keyword>
<keyword id="KW-0694">RNA-binding</keyword>
<keyword id="KW-0699">rRNA-binding</keyword>
<protein>
    <recommendedName>
        <fullName evidence="1">Large ribosomal subunit protein uL10</fullName>
    </recommendedName>
    <alternativeName>
        <fullName evidence="2">50S ribosomal protein L10</fullName>
    </alternativeName>
</protein>
<dbReference type="EMBL" id="CP000107">
    <property type="protein sequence ID" value="AAZ68218.1"/>
    <property type="molecule type" value="Genomic_DNA"/>
</dbReference>
<dbReference type="RefSeq" id="WP_011304296.1">
    <property type="nucleotide sequence ID" value="NC_007354.1"/>
</dbReference>
<dbReference type="SMR" id="Q3YST7"/>
<dbReference type="STRING" id="269484.Ecaj_0167"/>
<dbReference type="KEGG" id="ecn:Ecaj_0167"/>
<dbReference type="eggNOG" id="COG0244">
    <property type="taxonomic scope" value="Bacteria"/>
</dbReference>
<dbReference type="HOGENOM" id="CLU_092227_0_0_5"/>
<dbReference type="InParanoid" id="Q3YST7"/>
<dbReference type="Proteomes" id="UP000000435">
    <property type="component" value="Chromosome"/>
</dbReference>
<dbReference type="GO" id="GO:1990904">
    <property type="term" value="C:ribonucleoprotein complex"/>
    <property type="evidence" value="ECO:0007669"/>
    <property type="project" value="UniProtKB-KW"/>
</dbReference>
<dbReference type="GO" id="GO:0005840">
    <property type="term" value="C:ribosome"/>
    <property type="evidence" value="ECO:0007669"/>
    <property type="project" value="UniProtKB-KW"/>
</dbReference>
<dbReference type="GO" id="GO:0070180">
    <property type="term" value="F:large ribosomal subunit rRNA binding"/>
    <property type="evidence" value="ECO:0007669"/>
    <property type="project" value="UniProtKB-UniRule"/>
</dbReference>
<dbReference type="GO" id="GO:0006412">
    <property type="term" value="P:translation"/>
    <property type="evidence" value="ECO:0007669"/>
    <property type="project" value="UniProtKB-UniRule"/>
</dbReference>
<dbReference type="CDD" id="cd05797">
    <property type="entry name" value="Ribosomal_L10"/>
    <property type="match status" value="1"/>
</dbReference>
<dbReference type="Gene3D" id="3.30.70.1730">
    <property type="match status" value="1"/>
</dbReference>
<dbReference type="HAMAP" id="MF_00362">
    <property type="entry name" value="Ribosomal_uL10"/>
    <property type="match status" value="1"/>
</dbReference>
<dbReference type="InterPro" id="IPR001790">
    <property type="entry name" value="Ribosomal_uL10"/>
</dbReference>
<dbReference type="InterPro" id="IPR043141">
    <property type="entry name" value="Ribosomal_uL10-like_sf"/>
</dbReference>
<dbReference type="InterPro" id="IPR022973">
    <property type="entry name" value="Ribosomal_uL10_bac"/>
</dbReference>
<dbReference type="InterPro" id="IPR047865">
    <property type="entry name" value="Ribosomal_uL10_bac_type"/>
</dbReference>
<dbReference type="NCBIfam" id="NF000955">
    <property type="entry name" value="PRK00099.1-1"/>
    <property type="match status" value="1"/>
</dbReference>
<dbReference type="PANTHER" id="PTHR11560">
    <property type="entry name" value="39S RIBOSOMAL PROTEIN L10, MITOCHONDRIAL"/>
    <property type="match status" value="1"/>
</dbReference>
<dbReference type="Pfam" id="PF00466">
    <property type="entry name" value="Ribosomal_L10"/>
    <property type="match status" value="1"/>
</dbReference>
<dbReference type="SUPFAM" id="SSF160369">
    <property type="entry name" value="Ribosomal protein L10-like"/>
    <property type="match status" value="1"/>
</dbReference>
<sequence length="160" mass="18233">MKRSDKELHLSKVEGLFSKFKYFIIANFQGMVANDFFSLRKELKMANSGLMVVKNSLSRIALKKMGREELSAKFFGSIFIVYSDDIILISKILAKFMKDNKSKISLLCAYDSNEILDSEKVLYFASLPSLRELHAQIMSMISYNIPVRLALCLKALGNKE</sequence>
<organism>
    <name type="scientific">Ehrlichia canis (strain Jake)</name>
    <dbReference type="NCBI Taxonomy" id="269484"/>
    <lineage>
        <taxon>Bacteria</taxon>
        <taxon>Pseudomonadati</taxon>
        <taxon>Pseudomonadota</taxon>
        <taxon>Alphaproteobacteria</taxon>
        <taxon>Rickettsiales</taxon>
        <taxon>Anaplasmataceae</taxon>
        <taxon>Ehrlichia</taxon>
    </lineage>
</organism>
<comment type="function">
    <text evidence="1">Forms part of the ribosomal stalk, playing a central role in the interaction of the ribosome with GTP-bound translation factors.</text>
</comment>
<comment type="subunit">
    <text evidence="1">Part of the ribosomal stalk of the 50S ribosomal subunit. The N-terminus interacts with L11 and the large rRNA to form the base of the stalk. The C-terminus forms an elongated spine to which L12 dimers bind in a sequential fashion forming a multimeric L10(L12)X complex.</text>
</comment>
<comment type="similarity">
    <text evidence="1">Belongs to the universal ribosomal protein uL10 family.</text>
</comment>
<accession>Q3YST7</accession>